<protein>
    <recommendedName>
        <fullName evidence="1">Histidine--tRNA ligase 1</fullName>
        <ecNumber evidence="1">6.1.1.21</ecNumber>
    </recommendedName>
    <alternativeName>
        <fullName evidence="1">Histidyl-tRNA synthetase 1</fullName>
        <shortName evidence="1">HisRS 1</shortName>
    </alternativeName>
</protein>
<sequence length="426" mass="47533">MSIQLPRGTQDILPDDAAIWQYIEQVAKETCETYHYQEIRTPIFEHTEIFSRGVGDTTDIVQKEMYTFSDRGGRSLTLRPEGTAAVVRSYVNHKLYASPAQPTKLYYTGPMFRYERPQAGRMRQFVQFGVEALGSASPQLDAEVLALLIAICKKLGLVNLKLVINSLGDSESRQAHREALIAHFKPSIDEFCSDCQMRLEKNPLRILDCKKDREHPLMATAPSILDYLNEESRAYFQSLKETLDLLNIPYVVDPTLVRGLDYYNHTAFELLSTAPGFGAITTLCGGGRYNGLVQEFGGPETPGIGFAFSIERFILAMKAENVDLPVPQSLDAYVVTLGDEASRLGPQLLQRLRDGGIRADKDYLGKKMKAQLKAADRYQASYTIIIGEDEIAKQQALVKQMATGEQTVVAISDLTSFLQEQIRGGN</sequence>
<accession>Q5WHP4</accession>
<name>SYH1_SHOC1</name>
<evidence type="ECO:0000255" key="1">
    <source>
        <dbReference type="HAMAP-Rule" id="MF_00127"/>
    </source>
</evidence>
<organism>
    <name type="scientific">Shouchella clausii (strain KSM-K16)</name>
    <name type="common">Alkalihalobacillus clausii</name>
    <dbReference type="NCBI Taxonomy" id="66692"/>
    <lineage>
        <taxon>Bacteria</taxon>
        <taxon>Bacillati</taxon>
        <taxon>Bacillota</taxon>
        <taxon>Bacilli</taxon>
        <taxon>Bacillales</taxon>
        <taxon>Bacillaceae</taxon>
        <taxon>Shouchella</taxon>
    </lineage>
</organism>
<keyword id="KW-0030">Aminoacyl-tRNA synthetase</keyword>
<keyword id="KW-0067">ATP-binding</keyword>
<keyword id="KW-0963">Cytoplasm</keyword>
<keyword id="KW-0436">Ligase</keyword>
<keyword id="KW-0547">Nucleotide-binding</keyword>
<keyword id="KW-0648">Protein biosynthesis</keyword>
<keyword id="KW-1185">Reference proteome</keyword>
<dbReference type="EC" id="6.1.1.21" evidence="1"/>
<dbReference type="EMBL" id="AP006627">
    <property type="protein sequence ID" value="BAD64111.1"/>
    <property type="molecule type" value="Genomic_DNA"/>
</dbReference>
<dbReference type="SMR" id="Q5WHP4"/>
<dbReference type="STRING" id="66692.ABC1576"/>
<dbReference type="KEGG" id="bcl:ABC1576"/>
<dbReference type="eggNOG" id="COG0124">
    <property type="taxonomic scope" value="Bacteria"/>
</dbReference>
<dbReference type="HOGENOM" id="CLU_025113_1_1_9"/>
<dbReference type="OrthoDB" id="9800814at2"/>
<dbReference type="Proteomes" id="UP000001168">
    <property type="component" value="Chromosome"/>
</dbReference>
<dbReference type="GO" id="GO:0005737">
    <property type="term" value="C:cytoplasm"/>
    <property type="evidence" value="ECO:0007669"/>
    <property type="project" value="UniProtKB-SubCell"/>
</dbReference>
<dbReference type="GO" id="GO:0005524">
    <property type="term" value="F:ATP binding"/>
    <property type="evidence" value="ECO:0007669"/>
    <property type="project" value="UniProtKB-UniRule"/>
</dbReference>
<dbReference type="GO" id="GO:0140096">
    <property type="term" value="F:catalytic activity, acting on a protein"/>
    <property type="evidence" value="ECO:0007669"/>
    <property type="project" value="UniProtKB-ARBA"/>
</dbReference>
<dbReference type="GO" id="GO:0004821">
    <property type="term" value="F:histidine-tRNA ligase activity"/>
    <property type="evidence" value="ECO:0007669"/>
    <property type="project" value="UniProtKB-UniRule"/>
</dbReference>
<dbReference type="GO" id="GO:0016740">
    <property type="term" value="F:transferase activity"/>
    <property type="evidence" value="ECO:0007669"/>
    <property type="project" value="UniProtKB-ARBA"/>
</dbReference>
<dbReference type="GO" id="GO:0006427">
    <property type="term" value="P:histidyl-tRNA aminoacylation"/>
    <property type="evidence" value="ECO:0007669"/>
    <property type="project" value="UniProtKB-UniRule"/>
</dbReference>
<dbReference type="CDD" id="cd00773">
    <property type="entry name" value="HisRS-like_core"/>
    <property type="match status" value="1"/>
</dbReference>
<dbReference type="CDD" id="cd00859">
    <property type="entry name" value="HisRS_anticodon"/>
    <property type="match status" value="1"/>
</dbReference>
<dbReference type="FunFam" id="3.30.930.10:FF:000005">
    <property type="entry name" value="Histidine--tRNA ligase"/>
    <property type="match status" value="1"/>
</dbReference>
<dbReference type="Gene3D" id="3.40.50.800">
    <property type="entry name" value="Anticodon-binding domain"/>
    <property type="match status" value="1"/>
</dbReference>
<dbReference type="Gene3D" id="3.30.930.10">
    <property type="entry name" value="Bira Bifunctional Protein, Domain 2"/>
    <property type="match status" value="1"/>
</dbReference>
<dbReference type="HAMAP" id="MF_00127">
    <property type="entry name" value="His_tRNA_synth"/>
    <property type="match status" value="1"/>
</dbReference>
<dbReference type="InterPro" id="IPR006195">
    <property type="entry name" value="aa-tRNA-synth_II"/>
</dbReference>
<dbReference type="InterPro" id="IPR045864">
    <property type="entry name" value="aa-tRNA-synth_II/BPL/LPL"/>
</dbReference>
<dbReference type="InterPro" id="IPR004154">
    <property type="entry name" value="Anticodon-bd"/>
</dbReference>
<dbReference type="InterPro" id="IPR036621">
    <property type="entry name" value="Anticodon-bd_dom_sf"/>
</dbReference>
<dbReference type="InterPro" id="IPR015807">
    <property type="entry name" value="His-tRNA-ligase"/>
</dbReference>
<dbReference type="InterPro" id="IPR041715">
    <property type="entry name" value="HisRS-like_core"/>
</dbReference>
<dbReference type="InterPro" id="IPR004516">
    <property type="entry name" value="HisRS/HisZ"/>
</dbReference>
<dbReference type="InterPro" id="IPR033656">
    <property type="entry name" value="HisRS_anticodon"/>
</dbReference>
<dbReference type="NCBIfam" id="TIGR00442">
    <property type="entry name" value="hisS"/>
    <property type="match status" value="1"/>
</dbReference>
<dbReference type="PANTHER" id="PTHR43707:SF1">
    <property type="entry name" value="HISTIDINE--TRNA LIGASE, MITOCHONDRIAL-RELATED"/>
    <property type="match status" value="1"/>
</dbReference>
<dbReference type="PANTHER" id="PTHR43707">
    <property type="entry name" value="HISTIDYL-TRNA SYNTHETASE"/>
    <property type="match status" value="1"/>
</dbReference>
<dbReference type="Pfam" id="PF03129">
    <property type="entry name" value="HGTP_anticodon"/>
    <property type="match status" value="1"/>
</dbReference>
<dbReference type="Pfam" id="PF13393">
    <property type="entry name" value="tRNA-synt_His"/>
    <property type="match status" value="1"/>
</dbReference>
<dbReference type="PIRSF" id="PIRSF001549">
    <property type="entry name" value="His-tRNA_synth"/>
    <property type="match status" value="1"/>
</dbReference>
<dbReference type="SUPFAM" id="SSF52954">
    <property type="entry name" value="Class II aaRS ABD-related"/>
    <property type="match status" value="1"/>
</dbReference>
<dbReference type="SUPFAM" id="SSF55681">
    <property type="entry name" value="Class II aaRS and biotin synthetases"/>
    <property type="match status" value="1"/>
</dbReference>
<dbReference type="PROSITE" id="PS50862">
    <property type="entry name" value="AA_TRNA_LIGASE_II"/>
    <property type="match status" value="1"/>
</dbReference>
<reference key="1">
    <citation type="submission" date="2003-10" db="EMBL/GenBank/DDBJ databases">
        <title>The complete genome sequence of the alkaliphilic Bacillus clausii KSM-K16.</title>
        <authorList>
            <person name="Takaki Y."/>
            <person name="Kageyama Y."/>
            <person name="Shimamura S."/>
            <person name="Suzuki H."/>
            <person name="Nishi S."/>
            <person name="Hatada Y."/>
            <person name="Kawai S."/>
            <person name="Ito S."/>
            <person name="Horikoshi K."/>
        </authorList>
    </citation>
    <scope>NUCLEOTIDE SEQUENCE [LARGE SCALE GENOMIC DNA]</scope>
    <source>
        <strain>KSM-K16</strain>
    </source>
</reference>
<comment type="catalytic activity">
    <reaction evidence="1">
        <text>tRNA(His) + L-histidine + ATP = L-histidyl-tRNA(His) + AMP + diphosphate + H(+)</text>
        <dbReference type="Rhea" id="RHEA:17313"/>
        <dbReference type="Rhea" id="RHEA-COMP:9665"/>
        <dbReference type="Rhea" id="RHEA-COMP:9689"/>
        <dbReference type="ChEBI" id="CHEBI:15378"/>
        <dbReference type="ChEBI" id="CHEBI:30616"/>
        <dbReference type="ChEBI" id="CHEBI:33019"/>
        <dbReference type="ChEBI" id="CHEBI:57595"/>
        <dbReference type="ChEBI" id="CHEBI:78442"/>
        <dbReference type="ChEBI" id="CHEBI:78527"/>
        <dbReference type="ChEBI" id="CHEBI:456215"/>
        <dbReference type="EC" id="6.1.1.21"/>
    </reaction>
</comment>
<comment type="subunit">
    <text evidence="1">Homodimer.</text>
</comment>
<comment type="subcellular location">
    <subcellularLocation>
        <location evidence="1">Cytoplasm</location>
    </subcellularLocation>
</comment>
<comment type="similarity">
    <text evidence="1">Belongs to the class-II aminoacyl-tRNA synthetase family.</text>
</comment>
<feature type="chain" id="PRO_0000136101" description="Histidine--tRNA ligase 1">
    <location>
        <begin position="1"/>
        <end position="426"/>
    </location>
</feature>
<proteinExistence type="inferred from homology"/>
<gene>
    <name evidence="1" type="primary">hisS1</name>
    <name type="ordered locus">ABC1576</name>
</gene>